<proteinExistence type="evidence at transcript level"/>
<feature type="chain" id="PRO_0000442101" description="O-fucosyltransferase 20">
    <location>
        <begin position="1"/>
        <end position="555"/>
    </location>
</feature>
<feature type="topological domain" description="Cytoplasmic" evidence="6">
    <location>
        <begin position="1"/>
        <end position="58"/>
    </location>
</feature>
<feature type="transmembrane region" description="Helical; Signal-anchor for type II membrane protein" evidence="7">
    <location>
        <begin position="59"/>
        <end position="79"/>
    </location>
</feature>
<feature type="topological domain" description="Lumenal" evidence="6">
    <location>
        <begin position="80"/>
        <end position="555"/>
    </location>
</feature>
<feature type="region of interest" description="Disordered" evidence="3">
    <location>
        <begin position="110"/>
        <end position="130"/>
    </location>
</feature>
<feature type="region of interest" description="Disordered" evidence="3">
    <location>
        <begin position="525"/>
        <end position="555"/>
    </location>
</feature>
<feature type="compositionally biased region" description="Basic and acidic residues" evidence="3">
    <location>
        <begin position="529"/>
        <end position="555"/>
    </location>
</feature>
<feature type="binding site" evidence="1">
    <location>
        <begin position="330"/>
        <end position="332"/>
    </location>
    <ligand>
        <name>substrate</name>
    </ligand>
</feature>
<feature type="glycosylation site" description="N-linked (GlcNAc...) asparagine" evidence="2">
    <location>
        <position position="111"/>
    </location>
</feature>
<feature type="glycosylation site" description="N-linked (GlcNAc...) asparagine" evidence="2">
    <location>
        <position position="124"/>
    </location>
</feature>
<feature type="glycosylation site" description="N-linked (GlcNAc...) asparagine" evidence="2">
    <location>
        <position position="371"/>
    </location>
</feature>
<feature type="glycosylation site" description="N-linked (GlcNAc...) asparagine" evidence="2">
    <location>
        <position position="503"/>
    </location>
</feature>
<feature type="sequence conflict" description="In Ref. 1; AJF23778." evidence="6" ref="1">
    <original>Y</original>
    <variation>H</variation>
    <location>
        <position position="89"/>
    </location>
</feature>
<protein>
    <recommendedName>
        <fullName evidence="6">O-fucosyltransferase 20</fullName>
        <shortName evidence="6">O-FucT-20</shortName>
        <ecNumber evidence="6">2.4.1.-</ecNumber>
    </recommendedName>
    <alternativeName>
        <fullName evidence="5">BnAt2G(1)</fullName>
    </alternativeName>
    <alternativeName>
        <fullName evidence="8">O-fucosyltransferase family protein</fullName>
    </alternativeName>
</protein>
<comment type="function">
    <text evidence="4">May play a role in the biosynthesis of matrix polysaccharides and contribute to the biomechanics and development of the plant cell wall.</text>
</comment>
<comment type="pathway">
    <text evidence="6">Glycan metabolism.</text>
</comment>
<comment type="subcellular location">
    <subcellularLocation>
        <location evidence="4">Golgi apparatus membrane</location>
        <topology evidence="7">Single-pass type II membrane protein</topology>
    </subcellularLocation>
</comment>
<comment type="tissue specificity">
    <text evidence="4">Highly expressed in embryogenic microspore and in vegetative tissues.</text>
</comment>
<comment type="disruption phenotype">
    <text evidence="4">Increased number of lateral roots and wider stem diameter. Altered cell wall composition with an increased level of de-esterified pectins.</text>
</comment>
<comment type="similarity">
    <text evidence="6">Belongs to the glycosyltransferase GT106 family.</text>
</comment>
<comment type="sequence caution" evidence="6">
    <conflict type="erroneous initiation">
        <sequence resource="EMBL-CDS" id="AJF23778"/>
    </conflict>
    <text>Truncated N-terminus.</text>
</comment>
<organism>
    <name type="scientific">Brassica napus</name>
    <name type="common">Rape</name>
    <dbReference type="NCBI Taxonomy" id="3708"/>
    <lineage>
        <taxon>Eukaryota</taxon>
        <taxon>Viridiplantae</taxon>
        <taxon>Streptophyta</taxon>
        <taxon>Embryophyta</taxon>
        <taxon>Tracheophyta</taxon>
        <taxon>Spermatophyta</taxon>
        <taxon>Magnoliopsida</taxon>
        <taxon>eudicotyledons</taxon>
        <taxon>Gunneridae</taxon>
        <taxon>Pentapetalae</taxon>
        <taxon>rosids</taxon>
        <taxon>malvids</taxon>
        <taxon>Brassicales</taxon>
        <taxon>Brassicaceae</taxon>
        <taxon>Brassiceae</taxon>
        <taxon>Brassica</taxon>
    </lineage>
</organism>
<accession>A0A0B5GR44</accession>
<keyword id="KW-0119">Carbohydrate metabolism</keyword>
<keyword id="KW-0961">Cell wall biogenesis/degradation</keyword>
<keyword id="KW-0294">Fucose metabolism</keyword>
<keyword id="KW-0325">Glycoprotein</keyword>
<keyword id="KW-0328">Glycosyltransferase</keyword>
<keyword id="KW-0333">Golgi apparatus</keyword>
<keyword id="KW-0472">Membrane</keyword>
<keyword id="KW-0735">Signal-anchor</keyword>
<keyword id="KW-0808">Transferase</keyword>
<keyword id="KW-0812">Transmembrane</keyword>
<keyword id="KW-1133">Transmembrane helix</keyword>
<reference key="1">
    <citation type="thesis" date="2016" institute="University of Guelph" country="Canada">
        <title>Molecular analysis and functional elucidation of a novel plant O-fucosyltransferase in Arabidopsis thaliana and Brassica napus.</title>
        <authorList>
            <person name="Halliday J."/>
        </authorList>
    </citation>
    <scope>NUCLEOTIDE SEQUENCE [GENOMIC DNA] OF 84-555</scope>
    <scope>TISSUE SPECIFICITY</scope>
    <scope>SUBCELLULAR LOCATION</scope>
    <scope>DISRUPTION PHENOTYPE</scope>
    <scope>FUNCTION</scope>
    <source>
        <strain>cv. Topas</strain>
    </source>
</reference>
<name>OFT20_BRANA</name>
<sequence length="555" mass="62553">MALPKNGGNSSSTKKKVSYISVPSQIINSLSSSSLQSLLVSPKKSSRCTNRFSYRNPRIWFLTLFLVSLFGMLKLGLNVDPISLPFSRYPCSTGSFDEHHAVSHLAFASKNDTQSSSSSEHRKNETLPTEGDFWKQPDGLGFKPCLGFSRQYRKDSNSILKNRWKYLLVVVAGGMNQQRNQIVDAVIMARILGASLVVPVLQVNVIWGDESEFADIFDLEHFKNVLADDVHIVSSLPSTHVMTRPAEEKRTPLHASPQWIRAHYLKRINRERVLLLRGLDSRLSNDLPSDLQKLRCKVASQALRFSPRILELGNKLASRMLSEGQYLSLHLRMEKDVWVRTGSLPGLTPEYDEIVNSERQRHPELLTGRSNMTYNERKLAGLCPLTALEVTRLLKALEAPKDARIYWAGGEPLGGKEALEPLTKEFPHLYNKHDLALPGELEPFAKKASVMAAIDYIVCEKSDVFIPSHGGNMGHALQGQRAYAGHKKYITPNKRHMLPYFMNASLPESEFNRIVKDFHRESLGQPELRTGRGGKDVTKHPVSECMCSDRRQQQQ</sequence>
<gene>
    <name evidence="6" type="primary">OFUT20</name>
</gene>
<dbReference type="EC" id="2.4.1.-" evidence="6"/>
<dbReference type="EMBL" id="KM875557">
    <property type="protein sequence ID" value="AJF23778.1"/>
    <property type="status" value="ALT_INIT"/>
    <property type="molecule type" value="Genomic_DNA"/>
</dbReference>
<dbReference type="GlyCosmos" id="A0A0B5GR44">
    <property type="glycosylation" value="4 sites, No reported glycans"/>
</dbReference>
<dbReference type="GO" id="GO:0000139">
    <property type="term" value="C:Golgi membrane"/>
    <property type="evidence" value="ECO:0007669"/>
    <property type="project" value="UniProtKB-SubCell"/>
</dbReference>
<dbReference type="GO" id="GO:0016757">
    <property type="term" value="F:glycosyltransferase activity"/>
    <property type="evidence" value="ECO:0007669"/>
    <property type="project" value="UniProtKB-KW"/>
</dbReference>
<dbReference type="GO" id="GO:0071555">
    <property type="term" value="P:cell wall organization"/>
    <property type="evidence" value="ECO:0007669"/>
    <property type="project" value="UniProtKB-KW"/>
</dbReference>
<dbReference type="GO" id="GO:0006004">
    <property type="term" value="P:fucose metabolic process"/>
    <property type="evidence" value="ECO:0007669"/>
    <property type="project" value="UniProtKB-KW"/>
</dbReference>
<dbReference type="CDD" id="cd11299">
    <property type="entry name" value="O-FucT_plant"/>
    <property type="match status" value="1"/>
</dbReference>
<dbReference type="InterPro" id="IPR024709">
    <property type="entry name" value="FucosylTrfase_pln"/>
</dbReference>
<dbReference type="InterPro" id="IPR019378">
    <property type="entry name" value="GDP-Fuc_O-FucTrfase"/>
</dbReference>
<dbReference type="PANTHER" id="PTHR31741:SF66">
    <property type="entry name" value="O-FUCOSYLTRANSFERASE 20"/>
    <property type="match status" value="1"/>
</dbReference>
<dbReference type="PANTHER" id="PTHR31741">
    <property type="entry name" value="OS02G0726500 PROTEIN-RELATED"/>
    <property type="match status" value="1"/>
</dbReference>
<dbReference type="Pfam" id="PF10250">
    <property type="entry name" value="O-FucT"/>
    <property type="match status" value="1"/>
</dbReference>
<dbReference type="PIRSF" id="PIRSF009360">
    <property type="entry name" value="UCP009360"/>
    <property type="match status" value="1"/>
</dbReference>
<evidence type="ECO:0000250" key="1">
    <source>
        <dbReference type="UniProtKB" id="Q9H488"/>
    </source>
</evidence>
<evidence type="ECO:0000255" key="2">
    <source>
        <dbReference type="PROSITE-ProRule" id="PRU00498"/>
    </source>
</evidence>
<evidence type="ECO:0000256" key="3">
    <source>
        <dbReference type="SAM" id="MobiDB-lite"/>
    </source>
</evidence>
<evidence type="ECO:0000269" key="4">
    <source ref="1"/>
</evidence>
<evidence type="ECO:0000303" key="5">
    <source ref="1"/>
</evidence>
<evidence type="ECO:0000305" key="6"/>
<evidence type="ECO:0000305" key="7">
    <source ref="1"/>
</evidence>
<evidence type="ECO:0000312" key="8">
    <source>
        <dbReference type="EMBL" id="AJF23778.1"/>
    </source>
</evidence>